<feature type="chain" id="PRO_0000078051" description="Uncharacterized protein HI_1414">
    <location>
        <begin position="1"/>
        <end position="91"/>
    </location>
</feature>
<feature type="transmembrane region" description="Helical" evidence="1">
    <location>
        <begin position="7"/>
        <end position="23"/>
    </location>
</feature>
<protein>
    <recommendedName>
        <fullName>Uncharacterized protein HI_1414</fullName>
    </recommendedName>
</protein>
<accession>P44186</accession>
<organism>
    <name type="scientific">Haemophilus influenzae (strain ATCC 51907 / DSM 11121 / KW20 / Rd)</name>
    <dbReference type="NCBI Taxonomy" id="71421"/>
    <lineage>
        <taxon>Bacteria</taxon>
        <taxon>Pseudomonadati</taxon>
        <taxon>Pseudomonadota</taxon>
        <taxon>Gammaproteobacteria</taxon>
        <taxon>Pasteurellales</taxon>
        <taxon>Pasteurellaceae</taxon>
        <taxon>Haemophilus</taxon>
    </lineage>
</organism>
<dbReference type="EMBL" id="L42023">
    <property type="protein sequence ID" value="AAC23065.1"/>
    <property type="molecule type" value="Genomic_DNA"/>
</dbReference>
<dbReference type="PIR" id="G64028">
    <property type="entry name" value="G64028"/>
</dbReference>
<dbReference type="RefSeq" id="NP_439565.1">
    <property type="nucleotide sequence ID" value="NC_000907.1"/>
</dbReference>
<dbReference type="SMR" id="P44186"/>
<dbReference type="STRING" id="71421.HI_1414"/>
<dbReference type="EnsemblBacteria" id="AAC23065">
    <property type="protein sequence ID" value="AAC23065"/>
    <property type="gene ID" value="HI_1414"/>
</dbReference>
<dbReference type="KEGG" id="hin:HI_1414"/>
<dbReference type="PATRIC" id="fig|71421.8.peg.1473"/>
<dbReference type="HOGENOM" id="CLU_172462_0_0_6"/>
<dbReference type="OrthoDB" id="5689912at2"/>
<dbReference type="BioCyc" id="HINF71421:G1GJ1-1438-MONOMER"/>
<dbReference type="Proteomes" id="UP000000579">
    <property type="component" value="Chromosome"/>
</dbReference>
<dbReference type="GO" id="GO:0016020">
    <property type="term" value="C:membrane"/>
    <property type="evidence" value="ECO:0007669"/>
    <property type="project" value="UniProtKB-SubCell"/>
</dbReference>
<dbReference type="InterPro" id="IPR022538">
    <property type="entry name" value="DUF2570"/>
</dbReference>
<dbReference type="Pfam" id="PF10828">
    <property type="entry name" value="DUF2570"/>
    <property type="match status" value="1"/>
</dbReference>
<name>Y1414_HAEIN</name>
<proteinExistence type="predicted"/>
<reference key="1">
    <citation type="journal article" date="1995" name="Science">
        <title>Whole-genome random sequencing and assembly of Haemophilus influenzae Rd.</title>
        <authorList>
            <person name="Fleischmann R.D."/>
            <person name="Adams M.D."/>
            <person name="White O."/>
            <person name="Clayton R.A."/>
            <person name="Kirkness E.F."/>
            <person name="Kerlavage A.R."/>
            <person name="Bult C.J."/>
            <person name="Tomb J.-F."/>
            <person name="Dougherty B.A."/>
            <person name="Merrick J.M."/>
            <person name="McKenney K."/>
            <person name="Sutton G.G."/>
            <person name="FitzHugh W."/>
            <person name="Fields C.A."/>
            <person name="Gocayne J.D."/>
            <person name="Scott J.D."/>
            <person name="Shirley R."/>
            <person name="Liu L.-I."/>
            <person name="Glodek A."/>
            <person name="Kelley J.M."/>
            <person name="Weidman J.F."/>
            <person name="Phillips C.A."/>
            <person name="Spriggs T."/>
            <person name="Hedblom E."/>
            <person name="Cotton M.D."/>
            <person name="Utterback T.R."/>
            <person name="Hanna M.C."/>
            <person name="Nguyen D.T."/>
            <person name="Saudek D.M."/>
            <person name="Brandon R.C."/>
            <person name="Fine L.D."/>
            <person name="Fritchman J.L."/>
            <person name="Fuhrmann J.L."/>
            <person name="Geoghagen N.S.M."/>
            <person name="Gnehm C.L."/>
            <person name="McDonald L.A."/>
            <person name="Small K.V."/>
            <person name="Fraser C.M."/>
            <person name="Smith H.O."/>
            <person name="Venter J.C."/>
        </authorList>
    </citation>
    <scope>NUCLEOTIDE SEQUENCE [LARGE SCALE GENOMIC DNA]</scope>
    <source>
        <strain>ATCC 51907 / DSM 11121 / KW20 / Rd</strain>
    </source>
</reference>
<gene>
    <name type="ordered locus">HI_1414</name>
</gene>
<evidence type="ECO:0000255" key="1"/>
<evidence type="ECO:0000305" key="2"/>
<keyword id="KW-0472">Membrane</keyword>
<keyword id="KW-1185">Reference proteome</keyword>
<keyword id="KW-0812">Transmembrane</keyword>
<keyword id="KW-1133">Transmembrane helix</keyword>
<comment type="subcellular location">
    <subcellularLocation>
        <location evidence="2">Membrane</location>
        <topology evidence="2">Single-pass membrane protein</topology>
    </subcellularLocation>
</comment>
<sequence length="91" mass="10343">MTKYIYIALVGVVVVLFGALRYQSSVIDELEITTKQQEDTNKSLSLALQQERNDEIERIATENAESVKTIIKTQPCAHTRLPQSVLDRLHE</sequence>